<accession>Q9BUN1</accession>
<accession>B2RDU8</accession>
<accession>Q9NWZ4</accession>
<proteinExistence type="evidence at protein level"/>
<name>MENT_HUMAN</name>
<gene>
    <name type="primary">MENT</name>
    <name type="synonym">C1orf56</name>
    <name type="ORF">UNQ547/PRO1104</name>
</gene>
<reference key="1">
    <citation type="journal article" date="2003" name="Genome Res.">
        <title>The secreted protein discovery initiative (SPDI), a large-scale effort to identify novel human secreted and transmembrane proteins: a bioinformatics assessment.</title>
        <authorList>
            <person name="Clark H.F."/>
            <person name="Gurney A.L."/>
            <person name="Abaya E."/>
            <person name="Baker K."/>
            <person name="Baldwin D.T."/>
            <person name="Brush J."/>
            <person name="Chen J."/>
            <person name="Chow B."/>
            <person name="Chui C."/>
            <person name="Crowley C."/>
            <person name="Currell B."/>
            <person name="Deuel B."/>
            <person name="Dowd P."/>
            <person name="Eaton D."/>
            <person name="Foster J.S."/>
            <person name="Grimaldi C."/>
            <person name="Gu Q."/>
            <person name="Hass P.E."/>
            <person name="Heldens S."/>
            <person name="Huang A."/>
            <person name="Kim H.S."/>
            <person name="Klimowski L."/>
            <person name="Jin Y."/>
            <person name="Johnson S."/>
            <person name="Lee J."/>
            <person name="Lewis L."/>
            <person name="Liao D."/>
            <person name="Mark M.R."/>
            <person name="Robbie E."/>
            <person name="Sanchez C."/>
            <person name="Schoenfeld J."/>
            <person name="Seshagiri S."/>
            <person name="Simmons L."/>
            <person name="Singh J."/>
            <person name="Smith V."/>
            <person name="Stinson J."/>
            <person name="Vagts A."/>
            <person name="Vandlen R.L."/>
            <person name="Watanabe C."/>
            <person name="Wieand D."/>
            <person name="Woods K."/>
            <person name="Xie M.-H."/>
            <person name="Yansura D.G."/>
            <person name="Yi S."/>
            <person name="Yu G."/>
            <person name="Yuan J."/>
            <person name="Zhang M."/>
            <person name="Zhang Z."/>
            <person name="Goddard A.D."/>
            <person name="Wood W.I."/>
            <person name="Godowski P.J."/>
            <person name="Gray A.M."/>
        </authorList>
    </citation>
    <scope>NUCLEOTIDE SEQUENCE [LARGE SCALE MRNA] (ISOFORM 1)</scope>
</reference>
<reference key="2">
    <citation type="journal article" date="2004" name="Nat. Genet.">
        <title>Complete sequencing and characterization of 21,243 full-length human cDNAs.</title>
        <authorList>
            <person name="Ota T."/>
            <person name="Suzuki Y."/>
            <person name="Nishikawa T."/>
            <person name="Otsuki T."/>
            <person name="Sugiyama T."/>
            <person name="Irie R."/>
            <person name="Wakamatsu A."/>
            <person name="Hayashi K."/>
            <person name="Sato H."/>
            <person name="Nagai K."/>
            <person name="Kimura K."/>
            <person name="Makita H."/>
            <person name="Sekine M."/>
            <person name="Obayashi M."/>
            <person name="Nishi T."/>
            <person name="Shibahara T."/>
            <person name="Tanaka T."/>
            <person name="Ishii S."/>
            <person name="Yamamoto J."/>
            <person name="Saito K."/>
            <person name="Kawai Y."/>
            <person name="Isono Y."/>
            <person name="Nakamura Y."/>
            <person name="Nagahari K."/>
            <person name="Murakami K."/>
            <person name="Yasuda T."/>
            <person name="Iwayanagi T."/>
            <person name="Wagatsuma M."/>
            <person name="Shiratori A."/>
            <person name="Sudo H."/>
            <person name="Hosoiri T."/>
            <person name="Kaku Y."/>
            <person name="Kodaira H."/>
            <person name="Kondo H."/>
            <person name="Sugawara M."/>
            <person name="Takahashi M."/>
            <person name="Kanda K."/>
            <person name="Yokoi T."/>
            <person name="Furuya T."/>
            <person name="Kikkawa E."/>
            <person name="Omura Y."/>
            <person name="Abe K."/>
            <person name="Kamihara K."/>
            <person name="Katsuta N."/>
            <person name="Sato K."/>
            <person name="Tanikawa M."/>
            <person name="Yamazaki M."/>
            <person name="Ninomiya K."/>
            <person name="Ishibashi T."/>
            <person name="Yamashita H."/>
            <person name="Murakawa K."/>
            <person name="Fujimori K."/>
            <person name="Tanai H."/>
            <person name="Kimata M."/>
            <person name="Watanabe M."/>
            <person name="Hiraoka S."/>
            <person name="Chiba Y."/>
            <person name="Ishida S."/>
            <person name="Ono Y."/>
            <person name="Takiguchi S."/>
            <person name="Watanabe S."/>
            <person name="Yosida M."/>
            <person name="Hotuta T."/>
            <person name="Kusano J."/>
            <person name="Kanehori K."/>
            <person name="Takahashi-Fujii A."/>
            <person name="Hara H."/>
            <person name="Tanase T.-O."/>
            <person name="Nomura Y."/>
            <person name="Togiya S."/>
            <person name="Komai F."/>
            <person name="Hara R."/>
            <person name="Takeuchi K."/>
            <person name="Arita M."/>
            <person name="Imose N."/>
            <person name="Musashino K."/>
            <person name="Yuuki H."/>
            <person name="Oshima A."/>
            <person name="Sasaki N."/>
            <person name="Aotsuka S."/>
            <person name="Yoshikawa Y."/>
            <person name="Matsunawa H."/>
            <person name="Ichihara T."/>
            <person name="Shiohata N."/>
            <person name="Sano S."/>
            <person name="Moriya S."/>
            <person name="Momiyama H."/>
            <person name="Satoh N."/>
            <person name="Takami S."/>
            <person name="Terashima Y."/>
            <person name="Suzuki O."/>
            <person name="Nakagawa S."/>
            <person name="Senoh A."/>
            <person name="Mizoguchi H."/>
            <person name="Goto Y."/>
            <person name="Shimizu F."/>
            <person name="Wakebe H."/>
            <person name="Hishigaki H."/>
            <person name="Watanabe T."/>
            <person name="Sugiyama A."/>
            <person name="Takemoto M."/>
            <person name="Kawakami B."/>
            <person name="Yamazaki M."/>
            <person name="Watanabe K."/>
            <person name="Kumagai A."/>
            <person name="Itakura S."/>
            <person name="Fukuzumi Y."/>
            <person name="Fujimori Y."/>
            <person name="Komiyama M."/>
            <person name="Tashiro H."/>
            <person name="Tanigami A."/>
            <person name="Fujiwara T."/>
            <person name="Ono T."/>
            <person name="Yamada K."/>
            <person name="Fujii Y."/>
            <person name="Ozaki K."/>
            <person name="Hirao M."/>
            <person name="Ohmori Y."/>
            <person name="Kawabata A."/>
            <person name="Hikiji T."/>
            <person name="Kobatake N."/>
            <person name="Inagaki H."/>
            <person name="Ikema Y."/>
            <person name="Okamoto S."/>
            <person name="Okitani R."/>
            <person name="Kawakami T."/>
            <person name="Noguchi S."/>
            <person name="Itoh T."/>
            <person name="Shigeta K."/>
            <person name="Senba T."/>
            <person name="Matsumura K."/>
            <person name="Nakajima Y."/>
            <person name="Mizuno T."/>
            <person name="Morinaga M."/>
            <person name="Sasaki M."/>
            <person name="Togashi T."/>
            <person name="Oyama M."/>
            <person name="Hata H."/>
            <person name="Watanabe M."/>
            <person name="Komatsu T."/>
            <person name="Mizushima-Sugano J."/>
            <person name="Satoh T."/>
            <person name="Shirai Y."/>
            <person name="Takahashi Y."/>
            <person name="Nakagawa K."/>
            <person name="Okumura K."/>
            <person name="Nagase T."/>
            <person name="Nomura N."/>
            <person name="Kikuchi H."/>
            <person name="Masuho Y."/>
            <person name="Yamashita R."/>
            <person name="Nakai K."/>
            <person name="Yada T."/>
            <person name="Nakamura Y."/>
            <person name="Ohara O."/>
            <person name="Isogai T."/>
            <person name="Sugano S."/>
        </authorList>
    </citation>
    <scope>NUCLEOTIDE SEQUENCE [LARGE SCALE MRNA] (ISOFORMS 1 AND 2)</scope>
    <source>
        <tissue>Signet-ring cell carcinoma</tissue>
        <tissue>Testis</tissue>
    </source>
</reference>
<reference key="3">
    <citation type="journal article" date="2006" name="Nature">
        <title>The DNA sequence and biological annotation of human chromosome 1.</title>
        <authorList>
            <person name="Gregory S.G."/>
            <person name="Barlow K.F."/>
            <person name="McLay K.E."/>
            <person name="Kaul R."/>
            <person name="Swarbreck D."/>
            <person name="Dunham A."/>
            <person name="Scott C.E."/>
            <person name="Howe K.L."/>
            <person name="Woodfine K."/>
            <person name="Spencer C.C.A."/>
            <person name="Jones M.C."/>
            <person name="Gillson C."/>
            <person name="Searle S."/>
            <person name="Zhou Y."/>
            <person name="Kokocinski F."/>
            <person name="McDonald L."/>
            <person name="Evans R."/>
            <person name="Phillips K."/>
            <person name="Atkinson A."/>
            <person name="Cooper R."/>
            <person name="Jones C."/>
            <person name="Hall R.E."/>
            <person name="Andrews T.D."/>
            <person name="Lloyd C."/>
            <person name="Ainscough R."/>
            <person name="Almeida J.P."/>
            <person name="Ambrose K.D."/>
            <person name="Anderson F."/>
            <person name="Andrew R.W."/>
            <person name="Ashwell R.I.S."/>
            <person name="Aubin K."/>
            <person name="Babbage A.K."/>
            <person name="Bagguley C.L."/>
            <person name="Bailey J."/>
            <person name="Beasley H."/>
            <person name="Bethel G."/>
            <person name="Bird C.P."/>
            <person name="Bray-Allen S."/>
            <person name="Brown J.Y."/>
            <person name="Brown A.J."/>
            <person name="Buckley D."/>
            <person name="Burton J."/>
            <person name="Bye J."/>
            <person name="Carder C."/>
            <person name="Chapman J.C."/>
            <person name="Clark S.Y."/>
            <person name="Clarke G."/>
            <person name="Clee C."/>
            <person name="Cobley V."/>
            <person name="Collier R.E."/>
            <person name="Corby N."/>
            <person name="Coville G.J."/>
            <person name="Davies J."/>
            <person name="Deadman R."/>
            <person name="Dunn M."/>
            <person name="Earthrowl M."/>
            <person name="Ellington A.G."/>
            <person name="Errington H."/>
            <person name="Frankish A."/>
            <person name="Frankland J."/>
            <person name="French L."/>
            <person name="Garner P."/>
            <person name="Garnett J."/>
            <person name="Gay L."/>
            <person name="Ghori M.R.J."/>
            <person name="Gibson R."/>
            <person name="Gilby L.M."/>
            <person name="Gillett W."/>
            <person name="Glithero R.J."/>
            <person name="Grafham D.V."/>
            <person name="Griffiths C."/>
            <person name="Griffiths-Jones S."/>
            <person name="Grocock R."/>
            <person name="Hammond S."/>
            <person name="Harrison E.S.I."/>
            <person name="Hart E."/>
            <person name="Haugen E."/>
            <person name="Heath P.D."/>
            <person name="Holmes S."/>
            <person name="Holt K."/>
            <person name="Howden P.J."/>
            <person name="Hunt A.R."/>
            <person name="Hunt S.E."/>
            <person name="Hunter G."/>
            <person name="Isherwood J."/>
            <person name="James R."/>
            <person name="Johnson C."/>
            <person name="Johnson D."/>
            <person name="Joy A."/>
            <person name="Kay M."/>
            <person name="Kershaw J.K."/>
            <person name="Kibukawa M."/>
            <person name="Kimberley A.M."/>
            <person name="King A."/>
            <person name="Knights A.J."/>
            <person name="Lad H."/>
            <person name="Laird G."/>
            <person name="Lawlor S."/>
            <person name="Leongamornlert D.A."/>
            <person name="Lloyd D.M."/>
            <person name="Loveland J."/>
            <person name="Lovell J."/>
            <person name="Lush M.J."/>
            <person name="Lyne R."/>
            <person name="Martin S."/>
            <person name="Mashreghi-Mohammadi M."/>
            <person name="Matthews L."/>
            <person name="Matthews N.S.W."/>
            <person name="McLaren S."/>
            <person name="Milne S."/>
            <person name="Mistry S."/>
            <person name="Moore M.J.F."/>
            <person name="Nickerson T."/>
            <person name="O'Dell C.N."/>
            <person name="Oliver K."/>
            <person name="Palmeiri A."/>
            <person name="Palmer S.A."/>
            <person name="Parker A."/>
            <person name="Patel D."/>
            <person name="Pearce A.V."/>
            <person name="Peck A.I."/>
            <person name="Pelan S."/>
            <person name="Phelps K."/>
            <person name="Phillimore B.J."/>
            <person name="Plumb R."/>
            <person name="Rajan J."/>
            <person name="Raymond C."/>
            <person name="Rouse G."/>
            <person name="Saenphimmachak C."/>
            <person name="Sehra H.K."/>
            <person name="Sheridan E."/>
            <person name="Shownkeen R."/>
            <person name="Sims S."/>
            <person name="Skuce C.D."/>
            <person name="Smith M."/>
            <person name="Steward C."/>
            <person name="Subramanian S."/>
            <person name="Sycamore N."/>
            <person name="Tracey A."/>
            <person name="Tromans A."/>
            <person name="Van Helmond Z."/>
            <person name="Wall M."/>
            <person name="Wallis J.M."/>
            <person name="White S."/>
            <person name="Whitehead S.L."/>
            <person name="Wilkinson J.E."/>
            <person name="Willey D.L."/>
            <person name="Williams H."/>
            <person name="Wilming L."/>
            <person name="Wray P.W."/>
            <person name="Wu Z."/>
            <person name="Coulson A."/>
            <person name="Vaudin M."/>
            <person name="Sulston J.E."/>
            <person name="Durbin R.M."/>
            <person name="Hubbard T."/>
            <person name="Wooster R."/>
            <person name="Dunham I."/>
            <person name="Carter N.P."/>
            <person name="McVean G."/>
            <person name="Ross M.T."/>
            <person name="Harrow J."/>
            <person name="Olson M.V."/>
            <person name="Beck S."/>
            <person name="Rogers J."/>
            <person name="Bentley D.R."/>
        </authorList>
    </citation>
    <scope>NUCLEOTIDE SEQUENCE [LARGE SCALE GENOMIC DNA]</scope>
</reference>
<reference key="4">
    <citation type="submission" date="2005-09" db="EMBL/GenBank/DDBJ databases">
        <authorList>
            <person name="Mural R.J."/>
            <person name="Istrail S."/>
            <person name="Sutton G.G."/>
            <person name="Florea L."/>
            <person name="Halpern A.L."/>
            <person name="Mobarry C.M."/>
            <person name="Lippert R."/>
            <person name="Walenz B."/>
            <person name="Shatkay H."/>
            <person name="Dew I."/>
            <person name="Miller J.R."/>
            <person name="Flanigan M.J."/>
            <person name="Edwards N.J."/>
            <person name="Bolanos R."/>
            <person name="Fasulo D."/>
            <person name="Halldorsson B.V."/>
            <person name="Hannenhalli S."/>
            <person name="Turner R."/>
            <person name="Yooseph S."/>
            <person name="Lu F."/>
            <person name="Nusskern D.R."/>
            <person name="Shue B.C."/>
            <person name="Zheng X.H."/>
            <person name="Zhong F."/>
            <person name="Delcher A.L."/>
            <person name="Huson D.H."/>
            <person name="Kravitz S.A."/>
            <person name="Mouchard L."/>
            <person name="Reinert K."/>
            <person name="Remington K.A."/>
            <person name="Clark A.G."/>
            <person name="Waterman M.S."/>
            <person name="Eichler E.E."/>
            <person name="Adams M.D."/>
            <person name="Hunkapiller M.W."/>
            <person name="Myers E.W."/>
            <person name="Venter J.C."/>
        </authorList>
    </citation>
    <scope>NUCLEOTIDE SEQUENCE [LARGE SCALE GENOMIC DNA]</scope>
</reference>
<reference key="5">
    <citation type="journal article" date="2004" name="Genome Res.">
        <title>The status, quality, and expansion of the NIH full-length cDNA project: the Mammalian Gene Collection (MGC).</title>
        <authorList>
            <consortium name="The MGC Project Team"/>
        </authorList>
    </citation>
    <scope>NUCLEOTIDE SEQUENCE [LARGE SCALE MRNA] (ISOFORM 1)</scope>
    <source>
        <tissue>Kidney</tissue>
    </source>
</reference>
<reference key="6">
    <citation type="journal article" date="2012" name="J. Clin. Invest.">
        <title>Loss of Dnmt3b function upregulates the tumor modifier Ment and accelerates mouse lymphomagenesis.</title>
        <authorList>
            <person name="Hlady R.A."/>
            <person name="Novakova S."/>
            <person name="Opavska J."/>
            <person name="Klinkebiel D."/>
            <person name="Peters S.L."/>
            <person name="Bies J."/>
            <person name="Hannah J."/>
            <person name="Iqbal J."/>
            <person name="Anderson K.M."/>
            <person name="Siebler H.M."/>
            <person name="Smith L.M."/>
            <person name="Greiner T.C."/>
            <person name="Bastola D."/>
            <person name="Joshi S."/>
            <person name="Lockridge O."/>
            <person name="Simpson M.A."/>
            <person name="Felsher D.W."/>
            <person name="Wagner K.U."/>
            <person name="Chan W.C."/>
            <person name="Christman J.K."/>
            <person name="Opavsky R."/>
        </authorList>
    </citation>
    <scope>FUNCTION</scope>
    <scope>TISSUE SPECIFICITY</scope>
</reference>
<feature type="signal peptide" evidence="1">
    <location>
        <begin position="1"/>
        <end position="23"/>
    </location>
</feature>
<feature type="chain" id="PRO_0000304969" description="Protein MENT">
    <location>
        <begin position="24"/>
        <end position="341"/>
    </location>
</feature>
<feature type="region of interest" description="Disordered" evidence="2">
    <location>
        <begin position="115"/>
        <end position="196"/>
    </location>
</feature>
<feature type="compositionally biased region" description="Polar residues" evidence="2">
    <location>
        <begin position="127"/>
        <end position="155"/>
    </location>
</feature>
<feature type="splice variant" id="VSP_028157" description="In isoform 2." evidence="4">
    <original>GSQATLSQWS</original>
    <variation>CHLLRICGWC</variation>
    <location>
        <begin position="167"/>
        <end position="176"/>
    </location>
</feature>
<feature type="splice variant" id="VSP_028158" description="In isoform 2." evidence="4">
    <location>
        <begin position="177"/>
        <end position="341"/>
    </location>
</feature>
<organism>
    <name type="scientific">Homo sapiens</name>
    <name type="common">Human</name>
    <dbReference type="NCBI Taxonomy" id="9606"/>
    <lineage>
        <taxon>Eukaryota</taxon>
        <taxon>Metazoa</taxon>
        <taxon>Chordata</taxon>
        <taxon>Craniata</taxon>
        <taxon>Vertebrata</taxon>
        <taxon>Euteleostomi</taxon>
        <taxon>Mammalia</taxon>
        <taxon>Eutheria</taxon>
        <taxon>Euarchontoglires</taxon>
        <taxon>Primates</taxon>
        <taxon>Haplorrhini</taxon>
        <taxon>Catarrhini</taxon>
        <taxon>Hominidae</taxon>
        <taxon>Homo</taxon>
    </lineage>
</organism>
<sequence length="341" mass="36769">MVPAAGALLWVLLLNLGPRAAGAQGLTQTPTEMQRVSLRFGGPMTRSYRSTARTGLPRKTRIILEDENDAMADADRLAGPAAAELLAATVSTGFSRSSAINEEDGSSEEGVVINAGKDSTSRELPSATPNTAGSSSTRFIANSQEPEIRLTSSLPRSPGRSTEDLPGSQATLSQWSTPGSTPSRWPSPSPTAMPSPEDLRLVLMPWGPWHCHCKSGTMSRSRSGKLHGLSGRLRVGALSQLRTEHKPCTYQQCPCNRLREECPLDTSLCTDTNCASQSTTSTRTTTTPFPTIHLRSSPSLPPASPCPALAFWKRVRIGLEDIWNSLSSVFTEMQPIDRNQR</sequence>
<protein>
    <recommendedName>
        <fullName>Protein MENT</fullName>
    </recommendedName>
    <alternativeName>
        <fullName>Methylated in normal thymocytes protein</fullName>
    </alternativeName>
</protein>
<keyword id="KW-0025">Alternative splicing</keyword>
<keyword id="KW-0597">Phosphoprotein</keyword>
<keyword id="KW-1267">Proteomics identification</keyword>
<keyword id="KW-1185">Reference proteome</keyword>
<keyword id="KW-0964">Secreted</keyword>
<keyword id="KW-0732">Signal</keyword>
<dbReference type="EMBL" id="AY358436">
    <property type="protein sequence ID" value="AAQ88802.1"/>
    <property type="molecule type" value="mRNA"/>
</dbReference>
<dbReference type="EMBL" id="AK000526">
    <property type="protein sequence ID" value="BAA91231.1"/>
    <property type="molecule type" value="mRNA"/>
</dbReference>
<dbReference type="EMBL" id="AK315680">
    <property type="protein sequence ID" value="BAG38045.1"/>
    <property type="molecule type" value="mRNA"/>
</dbReference>
<dbReference type="EMBL" id="AL590133">
    <property type="status" value="NOT_ANNOTATED_CDS"/>
    <property type="molecule type" value="Genomic_DNA"/>
</dbReference>
<dbReference type="EMBL" id="CH471121">
    <property type="protein sequence ID" value="EAW53481.1"/>
    <property type="molecule type" value="Genomic_DNA"/>
</dbReference>
<dbReference type="EMBL" id="BC002469">
    <property type="protein sequence ID" value="AAH02469.1"/>
    <property type="molecule type" value="mRNA"/>
</dbReference>
<dbReference type="CCDS" id="CCDS980.1">
    <molecule id="Q9BUN1-1"/>
</dbReference>
<dbReference type="RefSeq" id="NP_060330.2">
    <molecule id="Q9BUN1-1"/>
    <property type="nucleotide sequence ID" value="NM_017860.4"/>
</dbReference>
<dbReference type="SMR" id="Q9BUN1"/>
<dbReference type="BioGRID" id="120302">
    <property type="interactions" value="5"/>
</dbReference>
<dbReference type="FunCoup" id="Q9BUN1">
    <property type="interactions" value="2"/>
</dbReference>
<dbReference type="IntAct" id="Q9BUN1">
    <property type="interactions" value="6"/>
</dbReference>
<dbReference type="STRING" id="9606.ENSP00000357922"/>
<dbReference type="GlyCosmos" id="Q9BUN1">
    <property type="glycosylation" value="5 sites, 3 glycans"/>
</dbReference>
<dbReference type="GlyGen" id="Q9BUN1">
    <property type="glycosylation" value="8 sites, 4 O-linked glycans (6 sites)"/>
</dbReference>
<dbReference type="iPTMnet" id="Q9BUN1"/>
<dbReference type="PhosphoSitePlus" id="Q9BUN1"/>
<dbReference type="BioMuta" id="C1orf56"/>
<dbReference type="DMDM" id="74752360"/>
<dbReference type="MassIVE" id="Q9BUN1"/>
<dbReference type="PaxDb" id="9606-ENSP00000357922"/>
<dbReference type="PeptideAtlas" id="Q9BUN1"/>
<dbReference type="ProteomicsDB" id="79111">
    <molecule id="Q9BUN1-1"/>
</dbReference>
<dbReference type="ProteomicsDB" id="79112">
    <molecule id="Q9BUN1-2"/>
</dbReference>
<dbReference type="Antibodypedia" id="49641">
    <property type="antibodies" value="65 antibodies from 13 providers"/>
</dbReference>
<dbReference type="DNASU" id="54964"/>
<dbReference type="Ensembl" id="ENST00000368926.6">
    <molecule id="Q9BUN1-1"/>
    <property type="protein sequence ID" value="ENSP00000357922.5"/>
    <property type="gene ID" value="ENSG00000143443.10"/>
</dbReference>
<dbReference type="GeneID" id="54964"/>
<dbReference type="KEGG" id="hsa:54964"/>
<dbReference type="MANE-Select" id="ENST00000368926.6">
    <property type="protein sequence ID" value="ENSP00000357922.5"/>
    <property type="RefSeq nucleotide sequence ID" value="NM_017860.5"/>
    <property type="RefSeq protein sequence ID" value="NP_060330.2"/>
</dbReference>
<dbReference type="UCSC" id="uc001ewn.4">
    <molecule id="Q9BUN1-1"/>
    <property type="organism name" value="human"/>
</dbReference>
<dbReference type="AGR" id="HGNC:26045"/>
<dbReference type="CTD" id="54964"/>
<dbReference type="DisGeNET" id="54964"/>
<dbReference type="GeneCards" id="C1orf56"/>
<dbReference type="HGNC" id="HGNC:26045">
    <property type="gene designation" value="C1orf56"/>
</dbReference>
<dbReference type="HPA" id="ENSG00000143443">
    <property type="expression patterns" value="Tissue enriched (testis)"/>
</dbReference>
<dbReference type="neXtProt" id="NX_Q9BUN1"/>
<dbReference type="OpenTargets" id="ENSG00000143443"/>
<dbReference type="PharmGKB" id="PA142672507"/>
<dbReference type="VEuPathDB" id="HostDB:ENSG00000143443"/>
<dbReference type="eggNOG" id="ENOG502SZ3R">
    <property type="taxonomic scope" value="Eukaryota"/>
</dbReference>
<dbReference type="GeneTree" id="ENSGT00390000014288"/>
<dbReference type="HOGENOM" id="CLU_066649_0_0_1"/>
<dbReference type="InParanoid" id="Q9BUN1"/>
<dbReference type="OMA" id="WHCHCRS"/>
<dbReference type="OrthoDB" id="9537043at2759"/>
<dbReference type="PAN-GO" id="Q9BUN1">
    <property type="GO annotations" value="1 GO annotation based on evolutionary models"/>
</dbReference>
<dbReference type="PhylomeDB" id="Q9BUN1"/>
<dbReference type="TreeFam" id="TF338845"/>
<dbReference type="PathwayCommons" id="Q9BUN1"/>
<dbReference type="SignaLink" id="Q9BUN1"/>
<dbReference type="BioGRID-ORCS" id="54964">
    <property type="hits" value="32 hits in 1146 CRISPR screens"/>
</dbReference>
<dbReference type="ChiTaRS" id="C1orf56">
    <property type="organism name" value="human"/>
</dbReference>
<dbReference type="GenomeRNAi" id="54964"/>
<dbReference type="Pharos" id="Q9BUN1">
    <property type="development level" value="Tbio"/>
</dbReference>
<dbReference type="PRO" id="PR:Q9BUN1"/>
<dbReference type="Proteomes" id="UP000005640">
    <property type="component" value="Chromosome 1"/>
</dbReference>
<dbReference type="RNAct" id="Q9BUN1">
    <property type="molecule type" value="protein"/>
</dbReference>
<dbReference type="Bgee" id="ENSG00000143443">
    <property type="expression patterns" value="Expressed in left testis and 154 other cell types or tissues"/>
</dbReference>
<dbReference type="GO" id="GO:0005576">
    <property type="term" value="C:extracellular region"/>
    <property type="evidence" value="ECO:0007669"/>
    <property type="project" value="UniProtKB-SubCell"/>
</dbReference>
<dbReference type="GO" id="GO:0042127">
    <property type="term" value="P:regulation of cell population proliferation"/>
    <property type="evidence" value="ECO:0000315"/>
    <property type="project" value="UniProtKB"/>
</dbReference>
<dbReference type="InterPro" id="IPR029292">
    <property type="entry name" value="MENT"/>
</dbReference>
<dbReference type="PANTHER" id="PTHR16240">
    <property type="entry name" value="PROTEIN MENT"/>
    <property type="match status" value="1"/>
</dbReference>
<dbReference type="PANTHER" id="PTHR16240:SF2">
    <property type="entry name" value="PROTEIN MENT"/>
    <property type="match status" value="1"/>
</dbReference>
<dbReference type="Pfam" id="PF15322">
    <property type="entry name" value="PMSI1"/>
    <property type="match status" value="1"/>
</dbReference>
<evidence type="ECO:0000255" key="1"/>
<evidence type="ECO:0000256" key="2">
    <source>
        <dbReference type="SAM" id="MobiDB-lite"/>
    </source>
</evidence>
<evidence type="ECO:0000269" key="3">
    <source>
    </source>
</evidence>
<evidence type="ECO:0000303" key="4">
    <source>
    </source>
</evidence>
<evidence type="ECO:0000305" key="5"/>
<comment type="function">
    <text evidence="3">Involved in control of cellular proliferation. Onconcogenic modifier contributing to the tumor suppressor function of DNMT3B.</text>
</comment>
<comment type="interaction">
    <interactant intactId="EBI-12022316">
        <id>Q9BUN1</id>
    </interactant>
    <interactant intactId="EBI-2834035">
        <id>Q5RI15</id>
        <label>COX20</label>
    </interactant>
    <organismsDiffer>false</organismsDiffer>
    <experiments>3</experiments>
</comment>
<comment type="interaction">
    <interactant intactId="EBI-12022316">
        <id>Q9BUN1</id>
    </interactant>
    <interactant intactId="EBI-748171">
        <id>O43186</id>
        <label>CRX</label>
    </interactant>
    <organismsDiffer>false</organismsDiffer>
    <experiments>3</experiments>
</comment>
<comment type="interaction">
    <interactant intactId="EBI-12022316">
        <id>Q9BUN1</id>
    </interactant>
    <interactant intactId="EBI-6509505">
        <id>Q0VD86</id>
        <label>INCA1</label>
    </interactant>
    <organismsDiffer>false</organismsDiffer>
    <experiments>3</experiments>
</comment>
<comment type="interaction">
    <interactant intactId="EBI-12022316">
        <id>Q9BUN1</id>
    </interactant>
    <interactant intactId="EBI-10829018">
        <id>Q04864-2</id>
        <label>REL</label>
    </interactant>
    <organismsDiffer>false</organismsDiffer>
    <experiments>3</experiments>
</comment>
<comment type="interaction">
    <interactant intactId="EBI-12022316">
        <id>Q9BUN1</id>
    </interactant>
    <interactant intactId="EBI-13636688">
        <id>P15884-3</id>
        <label>TCF4</label>
    </interactant>
    <organismsDiffer>false</organismsDiffer>
    <experiments>3</experiments>
</comment>
<comment type="subcellular location">
    <subcellularLocation>
        <location evidence="5">Secreted</location>
    </subcellularLocation>
</comment>
<comment type="alternative products">
    <event type="alternative splicing"/>
    <isoform>
        <id>Q9BUN1-1</id>
        <name>1</name>
        <sequence type="displayed"/>
    </isoform>
    <isoform>
        <id>Q9BUN1-2</id>
        <name>2</name>
        <sequence type="described" ref="VSP_028157 VSP_028158"/>
    </isoform>
</comment>
<comment type="tissue specificity">
    <text evidence="3">Plasma. Overexpressed in lymphomas.</text>
</comment>
<comment type="PTM">
    <text>Phosphorylation sites are present in the extracellular medium.</text>
</comment>